<sequence length="333" mass="36785">MLAEKLQINSITPHPSVEYWSVCKVEALFETPFLELVYRATQVHRKHFNPRAIQLSTLMSIKTGGCPEDCSYCPQSARYHTGVQNQQLLDVDEIVAKAKIAKARGAGRFCMGAAWRGPKPKDIEKVTEIIKAVKSLGLETCGTFGLLQDGMAEDLKEAGLDYYNHNLDTAPEHYAEVIGTRRFDDRLSTLGKVRKAGLKVCCGGIVGMNETRKERAGLIASLANLDPQPESVPINQLVKVEGTPLADAEELDWTEFVRTIAVARITMPKSYVRLSAGRSGMTEEMQAMCFMAGANSIFYGDKLLVTDNPEEDGDQLLMAKLDLEPETAENKKL</sequence>
<feature type="chain" id="PRO_0000185554" description="Biotin synthase">
    <location>
        <begin position="1"/>
        <end position="333"/>
    </location>
</feature>
<feature type="domain" description="Radical SAM core" evidence="2">
    <location>
        <begin position="51"/>
        <end position="278"/>
    </location>
</feature>
<feature type="binding site" evidence="1">
    <location>
        <position position="66"/>
    </location>
    <ligand>
        <name>[4Fe-4S] cluster</name>
        <dbReference type="ChEBI" id="CHEBI:49883"/>
        <note>4Fe-4S-S-AdoMet</note>
    </ligand>
</feature>
<feature type="binding site" evidence="1">
    <location>
        <position position="70"/>
    </location>
    <ligand>
        <name>[4Fe-4S] cluster</name>
        <dbReference type="ChEBI" id="CHEBI:49883"/>
        <note>4Fe-4S-S-AdoMet</note>
    </ligand>
</feature>
<feature type="binding site" evidence="1">
    <location>
        <position position="73"/>
    </location>
    <ligand>
        <name>[4Fe-4S] cluster</name>
        <dbReference type="ChEBI" id="CHEBI:49883"/>
        <note>4Fe-4S-S-AdoMet</note>
    </ligand>
</feature>
<feature type="binding site" evidence="1">
    <location>
        <position position="110"/>
    </location>
    <ligand>
        <name>[2Fe-2S] cluster</name>
        <dbReference type="ChEBI" id="CHEBI:190135"/>
    </ligand>
</feature>
<feature type="binding site" evidence="1">
    <location>
        <position position="141"/>
    </location>
    <ligand>
        <name>[2Fe-2S] cluster</name>
        <dbReference type="ChEBI" id="CHEBI:190135"/>
    </ligand>
</feature>
<feature type="binding site" evidence="1">
    <location>
        <position position="201"/>
    </location>
    <ligand>
        <name>[2Fe-2S] cluster</name>
        <dbReference type="ChEBI" id="CHEBI:190135"/>
    </ligand>
</feature>
<feature type="binding site" evidence="1">
    <location>
        <position position="273"/>
    </location>
    <ligand>
        <name>[2Fe-2S] cluster</name>
        <dbReference type="ChEBI" id="CHEBI:190135"/>
    </ligand>
</feature>
<proteinExistence type="inferred from homology"/>
<name>BIOB_HAEIN</name>
<dbReference type="EC" id="2.8.1.6" evidence="1"/>
<dbReference type="EMBL" id="L42023">
    <property type="protein sequence ID" value="AAC22682.1"/>
    <property type="molecule type" value="Genomic_DNA"/>
</dbReference>
<dbReference type="PIR" id="F64108">
    <property type="entry name" value="F64108"/>
</dbReference>
<dbReference type="RefSeq" id="NP_439182.1">
    <property type="nucleotide sequence ID" value="NC_000907.1"/>
</dbReference>
<dbReference type="SMR" id="P44987"/>
<dbReference type="STRING" id="71421.HI_1022"/>
<dbReference type="DNASU" id="950009"/>
<dbReference type="EnsemblBacteria" id="AAC22682">
    <property type="protein sequence ID" value="AAC22682"/>
    <property type="gene ID" value="HI_1022"/>
</dbReference>
<dbReference type="KEGG" id="hin:HI_1022"/>
<dbReference type="PATRIC" id="fig|71421.8.peg.1066"/>
<dbReference type="eggNOG" id="COG0502">
    <property type="taxonomic scope" value="Bacteria"/>
</dbReference>
<dbReference type="HOGENOM" id="CLU_033172_1_2_6"/>
<dbReference type="OrthoDB" id="9786826at2"/>
<dbReference type="PhylomeDB" id="P44987"/>
<dbReference type="BioCyc" id="HINF71421:G1GJ1-1062-MONOMER"/>
<dbReference type="UniPathway" id="UPA00078">
    <property type="reaction ID" value="UER00162"/>
</dbReference>
<dbReference type="Proteomes" id="UP000000579">
    <property type="component" value="Chromosome"/>
</dbReference>
<dbReference type="GO" id="GO:0051537">
    <property type="term" value="F:2 iron, 2 sulfur cluster binding"/>
    <property type="evidence" value="ECO:0000318"/>
    <property type="project" value="GO_Central"/>
</dbReference>
<dbReference type="GO" id="GO:0051539">
    <property type="term" value="F:4 iron, 4 sulfur cluster binding"/>
    <property type="evidence" value="ECO:0007669"/>
    <property type="project" value="UniProtKB-KW"/>
</dbReference>
<dbReference type="GO" id="GO:0004076">
    <property type="term" value="F:biotin synthase activity"/>
    <property type="evidence" value="ECO:0000318"/>
    <property type="project" value="GO_Central"/>
</dbReference>
<dbReference type="GO" id="GO:0005506">
    <property type="term" value="F:iron ion binding"/>
    <property type="evidence" value="ECO:0007669"/>
    <property type="project" value="UniProtKB-UniRule"/>
</dbReference>
<dbReference type="GO" id="GO:0009102">
    <property type="term" value="P:biotin biosynthetic process"/>
    <property type="evidence" value="ECO:0000318"/>
    <property type="project" value="GO_Central"/>
</dbReference>
<dbReference type="CDD" id="cd01335">
    <property type="entry name" value="Radical_SAM"/>
    <property type="match status" value="1"/>
</dbReference>
<dbReference type="FunFam" id="3.20.20.70:FF:000011">
    <property type="entry name" value="Biotin synthase"/>
    <property type="match status" value="1"/>
</dbReference>
<dbReference type="Gene3D" id="3.20.20.70">
    <property type="entry name" value="Aldolase class I"/>
    <property type="match status" value="1"/>
</dbReference>
<dbReference type="HAMAP" id="MF_01694">
    <property type="entry name" value="BioB"/>
    <property type="match status" value="1"/>
</dbReference>
<dbReference type="InterPro" id="IPR013785">
    <property type="entry name" value="Aldolase_TIM"/>
</dbReference>
<dbReference type="InterPro" id="IPR010722">
    <property type="entry name" value="BATS_dom"/>
</dbReference>
<dbReference type="InterPro" id="IPR002684">
    <property type="entry name" value="Biotin_synth/BioAB"/>
</dbReference>
<dbReference type="InterPro" id="IPR024177">
    <property type="entry name" value="Biotin_synthase"/>
</dbReference>
<dbReference type="InterPro" id="IPR006638">
    <property type="entry name" value="Elp3/MiaA/NifB-like_rSAM"/>
</dbReference>
<dbReference type="InterPro" id="IPR007197">
    <property type="entry name" value="rSAM"/>
</dbReference>
<dbReference type="NCBIfam" id="TIGR00433">
    <property type="entry name" value="bioB"/>
    <property type="match status" value="1"/>
</dbReference>
<dbReference type="PANTHER" id="PTHR22976">
    <property type="entry name" value="BIOTIN SYNTHASE"/>
    <property type="match status" value="1"/>
</dbReference>
<dbReference type="PANTHER" id="PTHR22976:SF2">
    <property type="entry name" value="BIOTIN SYNTHASE, MITOCHONDRIAL"/>
    <property type="match status" value="1"/>
</dbReference>
<dbReference type="Pfam" id="PF06968">
    <property type="entry name" value="BATS"/>
    <property type="match status" value="1"/>
</dbReference>
<dbReference type="Pfam" id="PF04055">
    <property type="entry name" value="Radical_SAM"/>
    <property type="match status" value="1"/>
</dbReference>
<dbReference type="PIRSF" id="PIRSF001619">
    <property type="entry name" value="Biotin_synth"/>
    <property type="match status" value="1"/>
</dbReference>
<dbReference type="SFLD" id="SFLDF00272">
    <property type="entry name" value="biotin_synthase"/>
    <property type="match status" value="1"/>
</dbReference>
<dbReference type="SFLD" id="SFLDS00029">
    <property type="entry name" value="Radical_SAM"/>
    <property type="match status" value="1"/>
</dbReference>
<dbReference type="SMART" id="SM00876">
    <property type="entry name" value="BATS"/>
    <property type="match status" value="1"/>
</dbReference>
<dbReference type="SMART" id="SM00729">
    <property type="entry name" value="Elp3"/>
    <property type="match status" value="1"/>
</dbReference>
<dbReference type="SUPFAM" id="SSF102114">
    <property type="entry name" value="Radical SAM enzymes"/>
    <property type="match status" value="1"/>
</dbReference>
<dbReference type="PROSITE" id="PS51918">
    <property type="entry name" value="RADICAL_SAM"/>
    <property type="match status" value="1"/>
</dbReference>
<accession>P44987</accession>
<comment type="function">
    <text evidence="1">Catalyzes the conversion of dethiobiotin (DTB) to biotin by the insertion of a sulfur atom into dethiobiotin via a radical-based mechanism.</text>
</comment>
<comment type="catalytic activity">
    <reaction evidence="1">
        <text>(4R,5S)-dethiobiotin + (sulfur carrier)-SH + 2 reduced [2Fe-2S]-[ferredoxin] + 2 S-adenosyl-L-methionine = (sulfur carrier)-H + biotin + 2 5'-deoxyadenosine + 2 L-methionine + 2 oxidized [2Fe-2S]-[ferredoxin]</text>
        <dbReference type="Rhea" id="RHEA:22060"/>
        <dbReference type="Rhea" id="RHEA-COMP:10000"/>
        <dbReference type="Rhea" id="RHEA-COMP:10001"/>
        <dbReference type="Rhea" id="RHEA-COMP:14737"/>
        <dbReference type="Rhea" id="RHEA-COMP:14739"/>
        <dbReference type="ChEBI" id="CHEBI:17319"/>
        <dbReference type="ChEBI" id="CHEBI:29917"/>
        <dbReference type="ChEBI" id="CHEBI:33737"/>
        <dbReference type="ChEBI" id="CHEBI:33738"/>
        <dbReference type="ChEBI" id="CHEBI:57586"/>
        <dbReference type="ChEBI" id="CHEBI:57844"/>
        <dbReference type="ChEBI" id="CHEBI:59789"/>
        <dbReference type="ChEBI" id="CHEBI:64428"/>
        <dbReference type="ChEBI" id="CHEBI:149473"/>
        <dbReference type="EC" id="2.8.1.6"/>
    </reaction>
</comment>
<comment type="cofactor">
    <cofactor evidence="1">
        <name>[4Fe-4S] cluster</name>
        <dbReference type="ChEBI" id="CHEBI:49883"/>
    </cofactor>
    <text evidence="1">Binds 1 [4Fe-4S] cluster. The cluster is coordinated with 3 cysteines and an exchangeable S-adenosyl-L-methionine.</text>
</comment>
<comment type="cofactor">
    <cofactor evidence="1">
        <name>[2Fe-2S] cluster</name>
        <dbReference type="ChEBI" id="CHEBI:190135"/>
    </cofactor>
    <text evidence="1">Binds 1 [2Fe-2S] cluster. The cluster is coordinated with 3 cysteines and 1 arginine.</text>
</comment>
<comment type="pathway">
    <text evidence="1">Cofactor biosynthesis; biotin biosynthesis; biotin from 7,8-diaminononanoate: step 2/2.</text>
</comment>
<comment type="subunit">
    <text evidence="1">Homodimer.</text>
</comment>
<comment type="similarity">
    <text evidence="1">Belongs to the radical SAM superfamily. Biotin synthase family.</text>
</comment>
<organism>
    <name type="scientific">Haemophilus influenzae (strain ATCC 51907 / DSM 11121 / KW20 / Rd)</name>
    <dbReference type="NCBI Taxonomy" id="71421"/>
    <lineage>
        <taxon>Bacteria</taxon>
        <taxon>Pseudomonadati</taxon>
        <taxon>Pseudomonadota</taxon>
        <taxon>Gammaproteobacteria</taxon>
        <taxon>Pasteurellales</taxon>
        <taxon>Pasteurellaceae</taxon>
        <taxon>Haemophilus</taxon>
    </lineage>
</organism>
<evidence type="ECO:0000255" key="1">
    <source>
        <dbReference type="HAMAP-Rule" id="MF_01694"/>
    </source>
</evidence>
<evidence type="ECO:0000255" key="2">
    <source>
        <dbReference type="PROSITE-ProRule" id="PRU01266"/>
    </source>
</evidence>
<keyword id="KW-0001">2Fe-2S</keyword>
<keyword id="KW-0004">4Fe-4S</keyword>
<keyword id="KW-0093">Biotin biosynthesis</keyword>
<keyword id="KW-0408">Iron</keyword>
<keyword id="KW-0411">Iron-sulfur</keyword>
<keyword id="KW-0479">Metal-binding</keyword>
<keyword id="KW-1185">Reference proteome</keyword>
<keyword id="KW-0949">S-adenosyl-L-methionine</keyword>
<keyword id="KW-0808">Transferase</keyword>
<protein>
    <recommendedName>
        <fullName evidence="1">Biotin synthase</fullName>
        <ecNumber evidence="1">2.8.1.6</ecNumber>
    </recommendedName>
</protein>
<reference key="1">
    <citation type="journal article" date="1995" name="Science">
        <title>Whole-genome random sequencing and assembly of Haemophilus influenzae Rd.</title>
        <authorList>
            <person name="Fleischmann R.D."/>
            <person name="Adams M.D."/>
            <person name="White O."/>
            <person name="Clayton R.A."/>
            <person name="Kirkness E.F."/>
            <person name="Kerlavage A.R."/>
            <person name="Bult C.J."/>
            <person name="Tomb J.-F."/>
            <person name="Dougherty B.A."/>
            <person name="Merrick J.M."/>
            <person name="McKenney K."/>
            <person name="Sutton G.G."/>
            <person name="FitzHugh W."/>
            <person name="Fields C.A."/>
            <person name="Gocayne J.D."/>
            <person name="Scott J.D."/>
            <person name="Shirley R."/>
            <person name="Liu L.-I."/>
            <person name="Glodek A."/>
            <person name="Kelley J.M."/>
            <person name="Weidman J.F."/>
            <person name="Phillips C.A."/>
            <person name="Spriggs T."/>
            <person name="Hedblom E."/>
            <person name="Cotton M.D."/>
            <person name="Utterback T.R."/>
            <person name="Hanna M.C."/>
            <person name="Nguyen D.T."/>
            <person name="Saudek D.M."/>
            <person name="Brandon R.C."/>
            <person name="Fine L.D."/>
            <person name="Fritchman J.L."/>
            <person name="Fuhrmann J.L."/>
            <person name="Geoghagen N.S.M."/>
            <person name="Gnehm C.L."/>
            <person name="McDonald L.A."/>
            <person name="Small K.V."/>
            <person name="Fraser C.M."/>
            <person name="Smith H.O."/>
            <person name="Venter J.C."/>
        </authorList>
    </citation>
    <scope>NUCLEOTIDE SEQUENCE [LARGE SCALE GENOMIC DNA]</scope>
    <source>
        <strain>ATCC 51907 / DSM 11121 / KW20 / Rd</strain>
    </source>
</reference>
<gene>
    <name evidence="1" type="primary">bioB</name>
    <name type="ordered locus">HI_1022</name>
</gene>